<dbReference type="EC" id="3.1.2.-" evidence="2"/>
<dbReference type="EC" id="3.1.2.2" evidence="2"/>
<dbReference type="EMBL" id="CR859922">
    <property type="protein sequence ID" value="CAH92077.1"/>
    <property type="molecule type" value="mRNA"/>
</dbReference>
<dbReference type="RefSeq" id="NP_001126211.1">
    <property type="nucleotide sequence ID" value="NM_001132739.1"/>
</dbReference>
<dbReference type="SMR" id="Q5R833"/>
<dbReference type="FunCoup" id="Q5R833">
    <property type="interactions" value="1720"/>
</dbReference>
<dbReference type="STRING" id="9601.ENSPPYP00000018207"/>
<dbReference type="GeneID" id="100173179"/>
<dbReference type="CTD" id="55856"/>
<dbReference type="eggNOG" id="KOG3328">
    <property type="taxonomic scope" value="Eukaryota"/>
</dbReference>
<dbReference type="InParanoid" id="Q5R833"/>
<dbReference type="OrthoDB" id="46529at2759"/>
<dbReference type="Proteomes" id="UP000001595">
    <property type="component" value="Unplaced"/>
</dbReference>
<dbReference type="GO" id="GO:0005829">
    <property type="term" value="C:cytosol"/>
    <property type="evidence" value="ECO:0007669"/>
    <property type="project" value="UniProtKB-SubCell"/>
</dbReference>
<dbReference type="GO" id="GO:0005739">
    <property type="term" value="C:mitochondrion"/>
    <property type="evidence" value="ECO:0007669"/>
    <property type="project" value="UniProtKB-SubCell"/>
</dbReference>
<dbReference type="GO" id="GO:0005634">
    <property type="term" value="C:nucleus"/>
    <property type="evidence" value="ECO:0007669"/>
    <property type="project" value="UniProtKB-SubCell"/>
</dbReference>
<dbReference type="GO" id="GO:0005819">
    <property type="term" value="C:spindle"/>
    <property type="evidence" value="ECO:0007669"/>
    <property type="project" value="UniProtKB-SubCell"/>
</dbReference>
<dbReference type="GO" id="GO:0047617">
    <property type="term" value="F:fatty acyl-CoA hydrolase activity"/>
    <property type="evidence" value="ECO:0007669"/>
    <property type="project" value="InterPro"/>
</dbReference>
<dbReference type="GO" id="GO:0006629">
    <property type="term" value="P:lipid metabolic process"/>
    <property type="evidence" value="ECO:0007669"/>
    <property type="project" value="UniProtKB-KW"/>
</dbReference>
<dbReference type="CDD" id="cd03443">
    <property type="entry name" value="PaaI_thioesterase"/>
    <property type="match status" value="1"/>
</dbReference>
<dbReference type="FunFam" id="3.10.129.10:FF:000021">
    <property type="entry name" value="Acyl-coenzyme A thioesterase 13"/>
    <property type="match status" value="1"/>
</dbReference>
<dbReference type="Gene3D" id="3.10.129.10">
    <property type="entry name" value="Hotdog Thioesterase"/>
    <property type="match status" value="1"/>
</dbReference>
<dbReference type="InterPro" id="IPR039298">
    <property type="entry name" value="ACOT13"/>
</dbReference>
<dbReference type="InterPro" id="IPR029069">
    <property type="entry name" value="HotDog_dom_sf"/>
</dbReference>
<dbReference type="InterPro" id="IPR003736">
    <property type="entry name" value="PAAI_dom"/>
</dbReference>
<dbReference type="InterPro" id="IPR006683">
    <property type="entry name" value="Thioestr_dom"/>
</dbReference>
<dbReference type="NCBIfam" id="TIGR00369">
    <property type="entry name" value="unchar_dom_1"/>
    <property type="match status" value="1"/>
</dbReference>
<dbReference type="PANTHER" id="PTHR21660:SF1">
    <property type="entry name" value="ACYL-COENZYME A THIOESTERASE 13"/>
    <property type="match status" value="1"/>
</dbReference>
<dbReference type="PANTHER" id="PTHR21660">
    <property type="entry name" value="THIOESTERASE SUPERFAMILY MEMBER-RELATED"/>
    <property type="match status" value="1"/>
</dbReference>
<dbReference type="Pfam" id="PF03061">
    <property type="entry name" value="4HBT"/>
    <property type="match status" value="1"/>
</dbReference>
<dbReference type="SUPFAM" id="SSF54637">
    <property type="entry name" value="Thioesterase/thiol ester dehydrase-isomerase"/>
    <property type="match status" value="1"/>
</dbReference>
<sequence>MTSMTQSLREVIKAMTKARNFERVLGKITLVSAAPGKVICEMKVEEEHTNAIGTLHGGLTATLVDNISTMALLCTERGAPGVSVDMNITYMSPAKLGEDIVITAHVLKQGKTLAFTSVDLTNKATGKLIAQGRHTKHLGN</sequence>
<name>ACO13_PONAB</name>
<keyword id="KW-0007">Acetylation</keyword>
<keyword id="KW-0963">Cytoplasm</keyword>
<keyword id="KW-0206">Cytoskeleton</keyword>
<keyword id="KW-0378">Hydrolase</keyword>
<keyword id="KW-0443">Lipid metabolism</keyword>
<keyword id="KW-0496">Mitochondrion</keyword>
<keyword id="KW-0539">Nucleus</keyword>
<keyword id="KW-1185">Reference proteome</keyword>
<comment type="function">
    <text evidence="1 2">Catalyzes the hydrolysis of acyl-CoAs into free fatty acids and coenzyme A (CoASH), regulating their respective intracellular levels (By similarity). Has acyl-CoA thioesterase activity towards medium (C12) and long-chain (C18) fatty acyl-CoA substrates. Can also hydrolyze 3-hydroxyphenylacetyl-CoA and 3,4-dihydroxyphenylacetyl-CoA (in vitro) (By similarity). May play a role in controlling adaptive thermogenesis (By similarity).</text>
</comment>
<comment type="catalytic activity">
    <reaction evidence="2">
        <text>a fatty acyl-CoA + H2O = a fatty acid + CoA + H(+)</text>
        <dbReference type="Rhea" id="RHEA:16781"/>
        <dbReference type="ChEBI" id="CHEBI:15377"/>
        <dbReference type="ChEBI" id="CHEBI:15378"/>
        <dbReference type="ChEBI" id="CHEBI:28868"/>
        <dbReference type="ChEBI" id="CHEBI:57287"/>
        <dbReference type="ChEBI" id="CHEBI:77636"/>
    </reaction>
    <physiologicalReaction direction="left-to-right" evidence="2">
        <dbReference type="Rhea" id="RHEA:16782"/>
    </physiologicalReaction>
</comment>
<comment type="catalytic activity">
    <reaction evidence="2">
        <text>decanoyl-CoA + H2O = decanoate + CoA + H(+)</text>
        <dbReference type="Rhea" id="RHEA:40059"/>
        <dbReference type="ChEBI" id="CHEBI:15377"/>
        <dbReference type="ChEBI" id="CHEBI:15378"/>
        <dbReference type="ChEBI" id="CHEBI:27689"/>
        <dbReference type="ChEBI" id="CHEBI:57287"/>
        <dbReference type="ChEBI" id="CHEBI:61430"/>
    </reaction>
    <physiologicalReaction direction="left-to-right" evidence="2">
        <dbReference type="Rhea" id="RHEA:40060"/>
    </physiologicalReaction>
</comment>
<comment type="catalytic activity">
    <reaction evidence="2">
        <text>octanoyl-CoA + H2O = octanoate + CoA + H(+)</text>
        <dbReference type="Rhea" id="RHEA:30143"/>
        <dbReference type="ChEBI" id="CHEBI:15377"/>
        <dbReference type="ChEBI" id="CHEBI:15378"/>
        <dbReference type="ChEBI" id="CHEBI:25646"/>
        <dbReference type="ChEBI" id="CHEBI:57287"/>
        <dbReference type="ChEBI" id="CHEBI:57386"/>
    </reaction>
    <physiologicalReaction direction="left-to-right" evidence="2">
        <dbReference type="Rhea" id="RHEA:30144"/>
    </physiologicalReaction>
</comment>
<comment type="catalytic activity">
    <reaction evidence="2">
        <text>butanoyl-CoA + H2O = butanoate + CoA + H(+)</text>
        <dbReference type="Rhea" id="RHEA:40111"/>
        <dbReference type="ChEBI" id="CHEBI:15377"/>
        <dbReference type="ChEBI" id="CHEBI:15378"/>
        <dbReference type="ChEBI" id="CHEBI:17968"/>
        <dbReference type="ChEBI" id="CHEBI:57287"/>
        <dbReference type="ChEBI" id="CHEBI:57371"/>
    </reaction>
    <physiologicalReaction direction="left-to-right" evidence="2">
        <dbReference type="Rhea" id="RHEA:40112"/>
    </physiologicalReaction>
</comment>
<comment type="catalytic activity">
    <reaction evidence="2">
        <text>hexanoyl-CoA + H2O = hexanoate + CoA + H(+)</text>
        <dbReference type="Rhea" id="RHEA:40115"/>
        <dbReference type="ChEBI" id="CHEBI:15377"/>
        <dbReference type="ChEBI" id="CHEBI:15378"/>
        <dbReference type="ChEBI" id="CHEBI:17120"/>
        <dbReference type="ChEBI" id="CHEBI:57287"/>
        <dbReference type="ChEBI" id="CHEBI:62620"/>
    </reaction>
    <physiologicalReaction direction="left-to-right" evidence="2">
        <dbReference type="Rhea" id="RHEA:40116"/>
    </physiologicalReaction>
</comment>
<comment type="catalytic activity">
    <reaction evidence="2">
        <text>tetradecanoyl-CoA + H2O = tetradecanoate + CoA + H(+)</text>
        <dbReference type="Rhea" id="RHEA:40119"/>
        <dbReference type="ChEBI" id="CHEBI:15377"/>
        <dbReference type="ChEBI" id="CHEBI:15378"/>
        <dbReference type="ChEBI" id="CHEBI:30807"/>
        <dbReference type="ChEBI" id="CHEBI:57287"/>
        <dbReference type="ChEBI" id="CHEBI:57385"/>
    </reaction>
    <physiologicalReaction direction="left-to-right" evidence="2">
        <dbReference type="Rhea" id="RHEA:40120"/>
    </physiologicalReaction>
</comment>
<comment type="catalytic activity">
    <reaction evidence="2">
        <text>hexadecanoyl-CoA + H2O = hexadecanoate + CoA + H(+)</text>
        <dbReference type="Rhea" id="RHEA:16645"/>
        <dbReference type="ChEBI" id="CHEBI:7896"/>
        <dbReference type="ChEBI" id="CHEBI:15377"/>
        <dbReference type="ChEBI" id="CHEBI:15378"/>
        <dbReference type="ChEBI" id="CHEBI:57287"/>
        <dbReference type="ChEBI" id="CHEBI:57379"/>
        <dbReference type="EC" id="3.1.2.2"/>
    </reaction>
    <physiologicalReaction direction="left-to-right" evidence="2">
        <dbReference type="Rhea" id="RHEA:16646"/>
    </physiologicalReaction>
</comment>
<comment type="catalytic activity">
    <reaction evidence="2">
        <text>dodecanoyl-CoA + H2O = dodecanoate + CoA + H(+)</text>
        <dbReference type="Rhea" id="RHEA:30135"/>
        <dbReference type="ChEBI" id="CHEBI:15377"/>
        <dbReference type="ChEBI" id="CHEBI:15378"/>
        <dbReference type="ChEBI" id="CHEBI:18262"/>
        <dbReference type="ChEBI" id="CHEBI:57287"/>
        <dbReference type="ChEBI" id="CHEBI:57375"/>
    </reaction>
    <physiologicalReaction direction="left-to-right" evidence="2">
        <dbReference type="Rhea" id="RHEA:30136"/>
    </physiologicalReaction>
</comment>
<comment type="catalytic activity">
    <reaction evidence="2">
        <text>(9Z)-octadecenoyl-CoA + H2O = (9Z)-octadecenoate + CoA + H(+)</text>
        <dbReference type="Rhea" id="RHEA:40139"/>
        <dbReference type="ChEBI" id="CHEBI:15377"/>
        <dbReference type="ChEBI" id="CHEBI:15378"/>
        <dbReference type="ChEBI" id="CHEBI:30823"/>
        <dbReference type="ChEBI" id="CHEBI:57287"/>
        <dbReference type="ChEBI" id="CHEBI:57387"/>
    </reaction>
    <physiologicalReaction direction="left-to-right" evidence="2">
        <dbReference type="Rhea" id="RHEA:40140"/>
    </physiologicalReaction>
</comment>
<comment type="subunit">
    <text evidence="1 2">Homotetramer (By similarity). Interacts with PCTP (By similarity).</text>
</comment>
<comment type="subcellular location">
    <subcellularLocation>
        <location evidence="1">Cytoplasm</location>
        <location evidence="1">Cytosol</location>
    </subcellularLocation>
    <subcellularLocation>
        <location evidence="1">Mitochondrion</location>
    </subcellularLocation>
    <subcellularLocation>
        <location evidence="1">Nucleus</location>
    </subcellularLocation>
    <subcellularLocation>
        <location evidence="1">Cytoplasm</location>
        <location evidence="1">Cytoskeleton</location>
        <location evidence="1">Spindle</location>
    </subcellularLocation>
    <text evidence="1">During interphase, found both in the nucleus and in the cytoplasm. At mitosis, localizes to the spindle. Colocalizes with tubulin.</text>
</comment>
<comment type="similarity">
    <text evidence="3">Belongs to the thioesterase PaaI family.</text>
</comment>
<proteinExistence type="evidence at transcript level"/>
<feature type="chain" id="PRO_0000424503" description="Acyl-coenzyme A thioesterase 13">
    <location>
        <begin position="1"/>
        <end position="140"/>
    </location>
</feature>
<feature type="initiator methionine" description="Removed; alternate" evidence="2">
    <location>
        <position position="1"/>
    </location>
</feature>
<feature type="chain" id="PRO_0000290196" description="Acyl-coenzyme A thioesterase 13, N-terminally processed">
    <location>
        <begin position="2"/>
        <end position="140"/>
    </location>
</feature>
<feature type="binding site" evidence="2">
    <location>
        <position position="46"/>
    </location>
    <ligand>
        <name>CoA</name>
        <dbReference type="ChEBI" id="CHEBI:57287"/>
    </ligand>
</feature>
<feature type="binding site" evidence="2">
    <location>
        <position position="50"/>
    </location>
    <ligand>
        <name>substrate</name>
    </ligand>
</feature>
<feature type="binding site" evidence="2">
    <location>
        <position position="81"/>
    </location>
    <ligand>
        <name>substrate</name>
    </ligand>
</feature>
<feature type="binding site" evidence="2">
    <location>
        <position position="83"/>
    </location>
    <ligand>
        <name>CoA</name>
        <dbReference type="ChEBI" id="CHEBI:57287"/>
    </ligand>
</feature>
<feature type="binding site" evidence="2">
    <location>
        <begin position="90"/>
        <end position="95"/>
    </location>
    <ligand>
        <name>CoA</name>
        <dbReference type="ChEBI" id="CHEBI:57287"/>
    </ligand>
</feature>
<feature type="binding site" evidence="2">
    <location>
        <begin position="108"/>
        <end position="113"/>
    </location>
    <ligand>
        <name>CoA</name>
        <dbReference type="ChEBI" id="CHEBI:57287"/>
    </ligand>
</feature>
<feature type="binding site" evidence="2">
    <location>
        <position position="137"/>
    </location>
    <ligand>
        <name>CoA</name>
        <dbReference type="ChEBI" id="CHEBI:57287"/>
    </ligand>
</feature>
<feature type="modified residue" description="N-acetylmethionine" evidence="2">
    <location>
        <position position="1"/>
    </location>
</feature>
<feature type="modified residue" description="N-acetylthreonine; in Acyl-coenzyme A thioesterase 13, N-terminally processed" evidence="2">
    <location>
        <position position="2"/>
    </location>
</feature>
<feature type="modified residue" description="N6-acetyllysine" evidence="1">
    <location>
        <position position="27"/>
    </location>
</feature>
<feature type="modified residue" description="N6-acetyllysine" evidence="1">
    <location>
        <position position="37"/>
    </location>
</feature>
<feature type="modified residue" description="N6-acetyllysine" evidence="1">
    <location>
        <position position="43"/>
    </location>
</feature>
<feature type="modified residue" description="N6-acetyllysine" evidence="1">
    <location>
        <position position="108"/>
    </location>
</feature>
<feature type="modified residue" description="N6-acetyllysine" evidence="1">
    <location>
        <position position="127"/>
    </location>
</feature>
<gene>
    <name type="primary">ACOT13</name>
    <name type="synonym">THEM2</name>
</gene>
<accession>Q5R833</accession>
<evidence type="ECO:0000250" key="1">
    <source>
        <dbReference type="UniProtKB" id="Q9CQR4"/>
    </source>
</evidence>
<evidence type="ECO:0000250" key="2">
    <source>
        <dbReference type="UniProtKB" id="Q9NPJ3"/>
    </source>
</evidence>
<evidence type="ECO:0000305" key="3"/>
<reference key="1">
    <citation type="submission" date="2004-11" db="EMBL/GenBank/DDBJ databases">
        <authorList>
            <consortium name="The German cDNA consortium"/>
        </authorList>
    </citation>
    <scope>NUCLEOTIDE SEQUENCE [LARGE SCALE MRNA]</scope>
    <source>
        <tissue>Heart</tissue>
    </source>
</reference>
<organism>
    <name type="scientific">Pongo abelii</name>
    <name type="common">Sumatran orangutan</name>
    <name type="synonym">Pongo pygmaeus abelii</name>
    <dbReference type="NCBI Taxonomy" id="9601"/>
    <lineage>
        <taxon>Eukaryota</taxon>
        <taxon>Metazoa</taxon>
        <taxon>Chordata</taxon>
        <taxon>Craniata</taxon>
        <taxon>Vertebrata</taxon>
        <taxon>Euteleostomi</taxon>
        <taxon>Mammalia</taxon>
        <taxon>Eutheria</taxon>
        <taxon>Euarchontoglires</taxon>
        <taxon>Primates</taxon>
        <taxon>Haplorrhini</taxon>
        <taxon>Catarrhini</taxon>
        <taxon>Hominidae</taxon>
        <taxon>Pongo</taxon>
    </lineage>
</organism>
<protein>
    <recommendedName>
        <fullName evidence="2">Acyl-coenzyme A thioesterase 13</fullName>
        <shortName evidence="2">Acyl-CoA thioesterase 13</shortName>
        <ecNumber evidence="2">3.1.2.-</ecNumber>
    </recommendedName>
    <alternativeName>
        <fullName evidence="2">Hotdog-fold thioesterase superfamily member 2</fullName>
    </alternativeName>
    <alternativeName>
        <fullName evidence="2">Palmitoyl-CoA hydrolase</fullName>
        <ecNumber evidence="2">3.1.2.2</ecNumber>
    </alternativeName>
    <alternativeName>
        <fullName evidence="2">Thioesterase superfamily member 2</fullName>
        <shortName evidence="2">THEM2</shortName>
    </alternativeName>
    <component>
        <recommendedName>
            <fullName>Acyl-coenzyme A thioesterase 13, N-terminally processed</fullName>
        </recommendedName>
    </component>
</protein>